<proteinExistence type="inferred from homology"/>
<organism>
    <name type="scientific">Caenorhabditis elegans</name>
    <dbReference type="NCBI Taxonomy" id="6239"/>
    <lineage>
        <taxon>Eukaryota</taxon>
        <taxon>Metazoa</taxon>
        <taxon>Ecdysozoa</taxon>
        <taxon>Nematoda</taxon>
        <taxon>Chromadorea</taxon>
        <taxon>Rhabditida</taxon>
        <taxon>Rhabditina</taxon>
        <taxon>Rhabditomorpha</taxon>
        <taxon>Rhabditoidea</taxon>
        <taxon>Rhabditidae</taxon>
        <taxon>Peloderinae</taxon>
        <taxon>Caenorhabditis</taxon>
    </lineage>
</organism>
<name>RM41_CAEEL</name>
<feature type="transit peptide" description="Mitochondrion" evidence="2">
    <location>
        <begin position="1"/>
        <end position="21"/>
    </location>
</feature>
<feature type="chain" id="PRO_0000273234" description="Large ribosomal subunit protein mL41">
    <location>
        <begin position="22"/>
        <end position="180"/>
    </location>
</feature>
<sequence length="180" mass="20884">MKLVLVSTRGVRSLNSTNFPAPWPFVKKGAFGQRKIGPMNYEKFKWPGQNREFPELSPKFQKLNPKELHRYTGVQADGFHDEKTGEFVPVKEMRSELVVPNLDGFKLRPYVSYRTDVQIEKRRVAYEKKVLEKGSERLADLHTVEDERWPPPKMSAETLFELAYGDTVRSAYKEGKYGNK</sequence>
<dbReference type="EMBL" id="FO080203">
    <property type="protein sequence ID" value="CCD61937.1"/>
    <property type="molecule type" value="Genomic_DNA"/>
</dbReference>
<dbReference type="PIR" id="T25460">
    <property type="entry name" value="T25460"/>
</dbReference>
<dbReference type="RefSeq" id="NP_493695.1">
    <property type="nucleotide sequence ID" value="NM_061294.6"/>
</dbReference>
<dbReference type="BioGRID" id="38793">
    <property type="interactions" value="2"/>
</dbReference>
<dbReference type="FunCoup" id="P90993">
    <property type="interactions" value="4"/>
</dbReference>
<dbReference type="STRING" id="6239.B0432.3.1"/>
<dbReference type="PaxDb" id="6239-B0432.3"/>
<dbReference type="PeptideAtlas" id="P90993"/>
<dbReference type="EnsemblMetazoa" id="B0432.3.1">
    <property type="protein sequence ID" value="B0432.3.1"/>
    <property type="gene ID" value="WBGene00015185"/>
</dbReference>
<dbReference type="GeneID" id="173415"/>
<dbReference type="KEGG" id="cel:CELE_B0432.3"/>
<dbReference type="UCSC" id="B0432.3">
    <property type="organism name" value="c. elegans"/>
</dbReference>
<dbReference type="AGR" id="WB:WBGene00015185"/>
<dbReference type="CTD" id="173415"/>
<dbReference type="WormBase" id="B0432.3">
    <property type="protein sequence ID" value="CE07741"/>
    <property type="gene ID" value="WBGene00015185"/>
    <property type="gene designation" value="mrpl-41"/>
</dbReference>
<dbReference type="eggNOG" id="KOG4756">
    <property type="taxonomic scope" value="Eukaryota"/>
</dbReference>
<dbReference type="GeneTree" id="ENSGT00390000013158"/>
<dbReference type="HOGENOM" id="CLU_1442271_0_0_1"/>
<dbReference type="InParanoid" id="P90993"/>
<dbReference type="OMA" id="APWPFVK"/>
<dbReference type="OrthoDB" id="408933at2759"/>
<dbReference type="Reactome" id="R-CEL-5389840">
    <property type="pathway name" value="Mitochondrial translation elongation"/>
</dbReference>
<dbReference type="Reactome" id="R-CEL-5419276">
    <property type="pathway name" value="Mitochondrial translation termination"/>
</dbReference>
<dbReference type="PRO" id="PR:P90993"/>
<dbReference type="Proteomes" id="UP000001940">
    <property type="component" value="Chromosome II"/>
</dbReference>
<dbReference type="Bgee" id="WBGene00015185">
    <property type="expression patterns" value="Expressed in larva and 4 other cell types or tissues"/>
</dbReference>
<dbReference type="GO" id="GO:0005762">
    <property type="term" value="C:mitochondrial large ribosomal subunit"/>
    <property type="evidence" value="ECO:0000250"/>
    <property type="project" value="UniProtKB"/>
</dbReference>
<dbReference type="GO" id="GO:1990904">
    <property type="term" value="C:ribonucleoprotein complex"/>
    <property type="evidence" value="ECO:0000250"/>
    <property type="project" value="UniProtKB"/>
</dbReference>
<dbReference type="GO" id="GO:0003735">
    <property type="term" value="F:structural constituent of ribosome"/>
    <property type="evidence" value="ECO:0000250"/>
    <property type="project" value="UniProtKB"/>
</dbReference>
<dbReference type="GO" id="GO:0006412">
    <property type="term" value="P:translation"/>
    <property type="evidence" value="ECO:0000250"/>
    <property type="project" value="UniProtKB"/>
</dbReference>
<dbReference type="InterPro" id="IPR019189">
    <property type="entry name" value="Ribosomal_mL41"/>
</dbReference>
<dbReference type="PANTHER" id="PTHR21338:SF0">
    <property type="entry name" value="LARGE RIBOSOMAL SUBUNIT PROTEIN ML41"/>
    <property type="match status" value="1"/>
</dbReference>
<dbReference type="PANTHER" id="PTHR21338">
    <property type="entry name" value="MITOCHONDRIAL RIBOSOMAL PROTEIN L41"/>
    <property type="match status" value="1"/>
</dbReference>
<dbReference type="Pfam" id="PF09809">
    <property type="entry name" value="MRP-L27"/>
    <property type="match status" value="1"/>
</dbReference>
<comment type="subunit">
    <text evidence="1">Component of the mitochondrial ribosome large subunit (39S) which comprises a 16S rRNA and about 50 distinct proteins.</text>
</comment>
<comment type="subcellular location">
    <subcellularLocation>
        <location evidence="1">Mitochondrion</location>
    </subcellularLocation>
</comment>
<comment type="similarity">
    <text evidence="3">Belongs to the mitochondrion-specific ribosomal protein mL41 family.</text>
</comment>
<accession>P90993</accession>
<gene>
    <name type="primary">mrpl-41</name>
    <name type="ORF">B0432.3</name>
</gene>
<reference key="1">
    <citation type="journal article" date="1998" name="Science">
        <title>Genome sequence of the nematode C. elegans: a platform for investigating biology.</title>
        <authorList>
            <consortium name="The C. elegans sequencing consortium"/>
        </authorList>
    </citation>
    <scope>NUCLEOTIDE SEQUENCE [LARGE SCALE GENOMIC DNA]</scope>
    <source>
        <strain>Bristol N2</strain>
    </source>
</reference>
<protein>
    <recommendedName>
        <fullName evidence="3">Large ribosomal subunit protein mL41</fullName>
    </recommendedName>
    <alternativeName>
        <fullName>39S ribosomal protein L41, mitochondrial</fullName>
        <shortName>L41mt</shortName>
        <shortName>MRP-L41</shortName>
    </alternativeName>
</protein>
<evidence type="ECO:0000250" key="1">
    <source>
        <dbReference type="UniProtKB" id="Q8IXM3"/>
    </source>
</evidence>
<evidence type="ECO:0000255" key="2"/>
<evidence type="ECO:0000305" key="3"/>
<keyword id="KW-0496">Mitochondrion</keyword>
<keyword id="KW-1185">Reference proteome</keyword>
<keyword id="KW-0687">Ribonucleoprotein</keyword>
<keyword id="KW-0689">Ribosomal protein</keyword>
<keyword id="KW-0809">Transit peptide</keyword>